<feature type="chain" id="PRO_0000258906" description="Anaerobic glycerol-3-phosphate dehydrogenase subunit B">
    <location>
        <begin position="1"/>
        <end position="419"/>
    </location>
</feature>
<name>GLPB_SALPA</name>
<organism>
    <name type="scientific">Salmonella paratyphi A (strain ATCC 9150 / SARB42)</name>
    <dbReference type="NCBI Taxonomy" id="295319"/>
    <lineage>
        <taxon>Bacteria</taxon>
        <taxon>Pseudomonadati</taxon>
        <taxon>Pseudomonadota</taxon>
        <taxon>Gammaproteobacteria</taxon>
        <taxon>Enterobacterales</taxon>
        <taxon>Enterobacteriaceae</taxon>
        <taxon>Salmonella</taxon>
    </lineage>
</organism>
<dbReference type="EC" id="1.1.5.3" evidence="1"/>
<dbReference type="EMBL" id="CP000026">
    <property type="protein sequence ID" value="AAV76581.1"/>
    <property type="molecule type" value="Genomic_DNA"/>
</dbReference>
<dbReference type="RefSeq" id="WP_000667146.1">
    <property type="nucleotide sequence ID" value="NC_006511.1"/>
</dbReference>
<dbReference type="KEGG" id="spt:SPA0579"/>
<dbReference type="HOGENOM" id="CLU_047793_0_0_6"/>
<dbReference type="UniPathway" id="UPA00618">
    <property type="reaction ID" value="UER00673"/>
</dbReference>
<dbReference type="Proteomes" id="UP000008185">
    <property type="component" value="Chromosome"/>
</dbReference>
<dbReference type="GO" id="GO:0009331">
    <property type="term" value="C:glycerol-3-phosphate dehydrogenase (FAD) complex"/>
    <property type="evidence" value="ECO:0007669"/>
    <property type="project" value="InterPro"/>
</dbReference>
<dbReference type="GO" id="GO:0004368">
    <property type="term" value="F:glycerol-3-phosphate dehydrogenase (quinone) activity"/>
    <property type="evidence" value="ECO:0007669"/>
    <property type="project" value="UniProtKB-UniRule"/>
</dbReference>
<dbReference type="GO" id="GO:0009061">
    <property type="term" value="P:anaerobic respiration"/>
    <property type="evidence" value="ECO:0007669"/>
    <property type="project" value="TreeGrafter"/>
</dbReference>
<dbReference type="GO" id="GO:0019563">
    <property type="term" value="P:glycerol catabolic process"/>
    <property type="evidence" value="ECO:0007669"/>
    <property type="project" value="UniProtKB-UniRule"/>
</dbReference>
<dbReference type="GO" id="GO:0046168">
    <property type="term" value="P:glycerol-3-phosphate catabolic process"/>
    <property type="evidence" value="ECO:0007669"/>
    <property type="project" value="TreeGrafter"/>
</dbReference>
<dbReference type="FunFam" id="3.50.50.60:FF:000125">
    <property type="entry name" value="Anaerobic glycerol-3-phosphate dehydrogenase subunit B"/>
    <property type="match status" value="1"/>
</dbReference>
<dbReference type="Gene3D" id="3.50.50.60">
    <property type="entry name" value="FAD/NAD(P)-binding domain"/>
    <property type="match status" value="1"/>
</dbReference>
<dbReference type="HAMAP" id="MF_00753">
    <property type="entry name" value="Glycerol3P_GlpB"/>
    <property type="match status" value="1"/>
</dbReference>
<dbReference type="InterPro" id="IPR003953">
    <property type="entry name" value="FAD-dep_OxRdtase_2_FAD-bd"/>
</dbReference>
<dbReference type="InterPro" id="IPR050315">
    <property type="entry name" value="FAD-oxidoreductase_2"/>
</dbReference>
<dbReference type="InterPro" id="IPR036188">
    <property type="entry name" value="FAD/NAD-bd_sf"/>
</dbReference>
<dbReference type="InterPro" id="IPR009158">
    <property type="entry name" value="G3P_DH_GlpB_su"/>
</dbReference>
<dbReference type="NCBIfam" id="TIGR03378">
    <property type="entry name" value="glycerol3P_GlpB"/>
    <property type="match status" value="1"/>
</dbReference>
<dbReference type="NCBIfam" id="NF003718">
    <property type="entry name" value="PRK05329.1-1"/>
    <property type="match status" value="1"/>
</dbReference>
<dbReference type="NCBIfam" id="NF003719">
    <property type="entry name" value="PRK05329.1-2"/>
    <property type="match status" value="1"/>
</dbReference>
<dbReference type="NCBIfam" id="NF003720">
    <property type="entry name" value="PRK05329.1-3"/>
    <property type="match status" value="1"/>
</dbReference>
<dbReference type="PANTHER" id="PTHR43400:SF11">
    <property type="entry name" value="ANAEROBIC GLYCEROL-3-PHOSPHATE DEHYDROGENASE SUBUNIT B"/>
    <property type="match status" value="1"/>
</dbReference>
<dbReference type="PANTHER" id="PTHR43400">
    <property type="entry name" value="FUMARATE REDUCTASE"/>
    <property type="match status" value="1"/>
</dbReference>
<dbReference type="Pfam" id="PF00890">
    <property type="entry name" value="FAD_binding_2"/>
    <property type="match status" value="1"/>
</dbReference>
<dbReference type="PIRSF" id="PIRSF000141">
    <property type="entry name" value="Anaerobic_G3P_dh"/>
    <property type="match status" value="1"/>
</dbReference>
<dbReference type="SUPFAM" id="SSF51905">
    <property type="entry name" value="FAD/NAD(P)-binding domain"/>
    <property type="match status" value="1"/>
</dbReference>
<sequence>MKFDTVIMGGGLAGLLCGLQLQQHGLRCAIVTRGQSALHFSSGSLDLLSALPDGQPVTDITAGLDALCRQAPEHPYSRLGAQKVLTLAQQAQTLLNASGAQLYGDVQQAHQRVTPLGTLRSTWLSSPEVPVWPLSAQRICVVGVSGLLDFQAHLAAASLRQRDLNVETAEIDLPELDVLRDNPTEFRAVNIARLLDNEEKWPLLYDALSPIATNCDMIIMPACFGLANDTLWRWLNERLPCALTLLPTLPPSVLGIRLHNQLQRQFVRQGGIWMPGDEVKKVTCRRGTVSEIWTRNHADIPLRPRFAVLASGSFFSSGLVAEREGIREPILGLDVQQTATRAEWYQQHFFDPQPWQQFGVVTDDAFRPSLAGNTVENLYAIGSVLAGFDPIAEGCGGGVCAVSALQAAHHIAERAGEQQ</sequence>
<reference key="1">
    <citation type="journal article" date="2004" name="Nat. Genet.">
        <title>Comparison of genome degradation in Paratyphi A and Typhi, human-restricted serovars of Salmonella enterica that cause typhoid.</title>
        <authorList>
            <person name="McClelland M."/>
            <person name="Sanderson K.E."/>
            <person name="Clifton S.W."/>
            <person name="Latreille P."/>
            <person name="Porwollik S."/>
            <person name="Sabo A."/>
            <person name="Meyer R."/>
            <person name="Bieri T."/>
            <person name="Ozersky P."/>
            <person name="McLellan M."/>
            <person name="Harkins C.R."/>
            <person name="Wang C."/>
            <person name="Nguyen C."/>
            <person name="Berghoff A."/>
            <person name="Elliott G."/>
            <person name="Kohlberg S."/>
            <person name="Strong C."/>
            <person name="Du F."/>
            <person name="Carter J."/>
            <person name="Kremizki C."/>
            <person name="Layman D."/>
            <person name="Leonard S."/>
            <person name="Sun H."/>
            <person name="Fulton L."/>
            <person name="Nash W."/>
            <person name="Miner T."/>
            <person name="Minx P."/>
            <person name="Delehaunty K."/>
            <person name="Fronick C."/>
            <person name="Magrini V."/>
            <person name="Nhan M."/>
            <person name="Warren W."/>
            <person name="Florea L."/>
            <person name="Spieth J."/>
            <person name="Wilson R.K."/>
        </authorList>
    </citation>
    <scope>NUCLEOTIDE SEQUENCE [LARGE SCALE GENOMIC DNA]</scope>
    <source>
        <strain>ATCC 9150 / SARB42</strain>
    </source>
</reference>
<keyword id="KW-0285">Flavoprotein</keyword>
<keyword id="KW-0288">FMN</keyword>
<keyword id="KW-0560">Oxidoreductase</keyword>
<comment type="function">
    <text evidence="1">Conversion of glycerol 3-phosphate to dihydroxyacetone. Uses fumarate or nitrate as electron acceptor.</text>
</comment>
<comment type="catalytic activity">
    <reaction evidence="1">
        <text>a quinone + sn-glycerol 3-phosphate = dihydroxyacetone phosphate + a quinol</text>
        <dbReference type="Rhea" id="RHEA:18977"/>
        <dbReference type="ChEBI" id="CHEBI:24646"/>
        <dbReference type="ChEBI" id="CHEBI:57597"/>
        <dbReference type="ChEBI" id="CHEBI:57642"/>
        <dbReference type="ChEBI" id="CHEBI:132124"/>
        <dbReference type="EC" id="1.1.5.3"/>
    </reaction>
</comment>
<comment type="cofactor">
    <cofactor evidence="1">
        <name>FMN</name>
        <dbReference type="ChEBI" id="CHEBI:58210"/>
    </cofactor>
</comment>
<comment type="pathway">
    <text evidence="1">Polyol metabolism; glycerol degradation via glycerol kinase pathway; glycerone phosphate from sn-glycerol 3-phosphate (anaerobic route): step 1/1.</text>
</comment>
<comment type="subunit">
    <text evidence="1">Composed of a catalytic GlpA/B dimer and of membrane bound GlpC.</text>
</comment>
<comment type="similarity">
    <text evidence="1">Belongs to the anaerobic G-3-P dehydrogenase subunit B family.</text>
</comment>
<evidence type="ECO:0000255" key="1">
    <source>
        <dbReference type="HAMAP-Rule" id="MF_00753"/>
    </source>
</evidence>
<accession>Q5PI45</accession>
<protein>
    <recommendedName>
        <fullName evidence="1">Anaerobic glycerol-3-phosphate dehydrogenase subunit B</fullName>
        <shortName evidence="1">Anaerobic G-3-P dehydrogenase subunit B</shortName>
        <shortName evidence="1">Anaerobic G3Pdhase B</shortName>
        <ecNumber evidence="1">1.1.5.3</ecNumber>
    </recommendedName>
</protein>
<gene>
    <name evidence="1" type="primary">glpB</name>
    <name type="ordered locus">SPA0579</name>
</gene>
<proteinExistence type="inferred from homology"/>